<keyword id="KW-0474">Menaquinone biosynthesis</keyword>
<keyword id="KW-0489">Methyltransferase</keyword>
<keyword id="KW-0949">S-adenosyl-L-methionine</keyword>
<keyword id="KW-0808">Transferase</keyword>
<keyword id="KW-0831">Ubiquinone biosynthesis</keyword>
<organism>
    <name type="scientific">Coxiella burnetii (strain Dugway 5J108-111)</name>
    <dbReference type="NCBI Taxonomy" id="434922"/>
    <lineage>
        <taxon>Bacteria</taxon>
        <taxon>Pseudomonadati</taxon>
        <taxon>Pseudomonadota</taxon>
        <taxon>Gammaproteobacteria</taxon>
        <taxon>Legionellales</taxon>
        <taxon>Coxiellaceae</taxon>
        <taxon>Coxiella</taxon>
    </lineage>
</organism>
<accession>A9KD75</accession>
<sequence length="250" mass="28236">MNETEKSTHFGYQTVPTDQKTDKVKHVFESVAAKYDLMNDLMSLGIHRWWKDFAITQCRLRTGQRILDLAGGTGDLAKRISPLVGDEGEVVIADINAAMLNVGRRRLLDQGIFRNIQFIQADAEKLPFPNNFFDRIVIGFGLRNVTNQLAALQSMHRVIKPGGFVVILEFSKPTLAPLKAVYDAYSFQLLPRLGKLVAKDEESYRYLVESIRMHPDQEALLSKMTDAGFEDCDYHNLSGGIVAVHRGYKF</sequence>
<reference key="1">
    <citation type="journal article" date="2009" name="Infect. Immun.">
        <title>Comparative genomics reveal extensive transposon-mediated genomic plasticity and diversity among potential effector proteins within the genus Coxiella.</title>
        <authorList>
            <person name="Beare P.A."/>
            <person name="Unsworth N."/>
            <person name="Andoh M."/>
            <person name="Voth D.E."/>
            <person name="Omsland A."/>
            <person name="Gilk S.D."/>
            <person name="Williams K.P."/>
            <person name="Sobral B.W."/>
            <person name="Kupko J.J. III"/>
            <person name="Porcella S.F."/>
            <person name="Samuel J.E."/>
            <person name="Heinzen R.A."/>
        </authorList>
    </citation>
    <scope>NUCLEOTIDE SEQUENCE [LARGE SCALE GENOMIC DNA]</scope>
    <source>
        <strain>Dugway 5J108-111</strain>
    </source>
</reference>
<gene>
    <name evidence="1" type="primary">ubiE</name>
    <name type="ordered locus">CBUD_2118</name>
</gene>
<feature type="chain" id="PRO_1000088280" description="Ubiquinone/menaquinone biosynthesis C-methyltransferase UbiE">
    <location>
        <begin position="1"/>
        <end position="250"/>
    </location>
</feature>
<feature type="binding site" evidence="1">
    <location>
        <position position="73"/>
    </location>
    <ligand>
        <name>S-adenosyl-L-methionine</name>
        <dbReference type="ChEBI" id="CHEBI:59789"/>
    </ligand>
</feature>
<feature type="binding site" evidence="1">
    <location>
        <position position="94"/>
    </location>
    <ligand>
        <name>S-adenosyl-L-methionine</name>
        <dbReference type="ChEBI" id="CHEBI:59789"/>
    </ligand>
</feature>
<feature type="binding site" evidence="1">
    <location>
        <begin position="122"/>
        <end position="123"/>
    </location>
    <ligand>
        <name>S-adenosyl-L-methionine</name>
        <dbReference type="ChEBI" id="CHEBI:59789"/>
    </ligand>
</feature>
<evidence type="ECO:0000255" key="1">
    <source>
        <dbReference type="HAMAP-Rule" id="MF_01813"/>
    </source>
</evidence>
<name>UBIE_COXBN</name>
<proteinExistence type="inferred from homology"/>
<comment type="function">
    <text evidence="1">Methyltransferase required for the conversion of demethylmenaquinol (DMKH2) to menaquinol (MKH2) and the conversion of 2-polyprenyl-6-methoxy-1,4-benzoquinol (DDMQH2) to 2-polyprenyl-3-methyl-6-methoxy-1,4-benzoquinol (DMQH2).</text>
</comment>
<comment type="catalytic activity">
    <reaction evidence="1">
        <text>a 2-demethylmenaquinol + S-adenosyl-L-methionine = a menaquinol + S-adenosyl-L-homocysteine + H(+)</text>
        <dbReference type="Rhea" id="RHEA:42640"/>
        <dbReference type="Rhea" id="RHEA-COMP:9539"/>
        <dbReference type="Rhea" id="RHEA-COMP:9563"/>
        <dbReference type="ChEBI" id="CHEBI:15378"/>
        <dbReference type="ChEBI" id="CHEBI:18151"/>
        <dbReference type="ChEBI" id="CHEBI:55437"/>
        <dbReference type="ChEBI" id="CHEBI:57856"/>
        <dbReference type="ChEBI" id="CHEBI:59789"/>
        <dbReference type="EC" id="2.1.1.163"/>
    </reaction>
</comment>
<comment type="catalytic activity">
    <reaction evidence="1">
        <text>a 2-methoxy-6-(all-trans-polyprenyl)benzene-1,4-diol + S-adenosyl-L-methionine = a 5-methoxy-2-methyl-3-(all-trans-polyprenyl)benzene-1,4-diol + S-adenosyl-L-homocysteine + H(+)</text>
        <dbReference type="Rhea" id="RHEA:28286"/>
        <dbReference type="Rhea" id="RHEA-COMP:10858"/>
        <dbReference type="Rhea" id="RHEA-COMP:10859"/>
        <dbReference type="ChEBI" id="CHEBI:15378"/>
        <dbReference type="ChEBI" id="CHEBI:57856"/>
        <dbReference type="ChEBI" id="CHEBI:59789"/>
        <dbReference type="ChEBI" id="CHEBI:84166"/>
        <dbReference type="ChEBI" id="CHEBI:84167"/>
        <dbReference type="EC" id="2.1.1.201"/>
    </reaction>
</comment>
<comment type="pathway">
    <text evidence="1">Quinol/quinone metabolism; menaquinone biosynthesis; menaquinol from 1,4-dihydroxy-2-naphthoate: step 2/2.</text>
</comment>
<comment type="pathway">
    <text evidence="1">Cofactor biosynthesis; ubiquinone biosynthesis.</text>
</comment>
<comment type="similarity">
    <text evidence="1">Belongs to the class I-like SAM-binding methyltransferase superfamily. MenG/UbiE family.</text>
</comment>
<protein>
    <recommendedName>
        <fullName evidence="1">Ubiquinone/menaquinone biosynthesis C-methyltransferase UbiE</fullName>
        <ecNumber evidence="1">2.1.1.163</ecNumber>
        <ecNumber evidence="1">2.1.1.201</ecNumber>
    </recommendedName>
    <alternativeName>
        <fullName evidence="1">2-methoxy-6-polyprenyl-1,4-benzoquinol methylase</fullName>
    </alternativeName>
    <alternativeName>
        <fullName evidence="1">Demethylmenaquinone methyltransferase</fullName>
    </alternativeName>
</protein>
<dbReference type="EC" id="2.1.1.163" evidence="1"/>
<dbReference type="EC" id="2.1.1.201" evidence="1"/>
<dbReference type="EMBL" id="CP000733">
    <property type="protein sequence ID" value="ABS78462.1"/>
    <property type="molecule type" value="Genomic_DNA"/>
</dbReference>
<dbReference type="RefSeq" id="WP_010958603.1">
    <property type="nucleotide sequence ID" value="NC_009727.1"/>
</dbReference>
<dbReference type="SMR" id="A9KD75"/>
<dbReference type="KEGG" id="cbd:CBUD_2118"/>
<dbReference type="HOGENOM" id="CLU_037990_0_0_6"/>
<dbReference type="UniPathway" id="UPA00079">
    <property type="reaction ID" value="UER00169"/>
</dbReference>
<dbReference type="UniPathway" id="UPA00232"/>
<dbReference type="Proteomes" id="UP000008555">
    <property type="component" value="Chromosome"/>
</dbReference>
<dbReference type="GO" id="GO:0008425">
    <property type="term" value="F:2-methoxy-6-polyprenyl-1,4-benzoquinol methyltransferase activity"/>
    <property type="evidence" value="ECO:0007669"/>
    <property type="project" value="UniProtKB-UniRule"/>
</dbReference>
<dbReference type="GO" id="GO:0043770">
    <property type="term" value="F:demethylmenaquinone methyltransferase activity"/>
    <property type="evidence" value="ECO:0007669"/>
    <property type="project" value="UniProtKB-UniRule"/>
</dbReference>
<dbReference type="GO" id="GO:0009060">
    <property type="term" value="P:aerobic respiration"/>
    <property type="evidence" value="ECO:0007669"/>
    <property type="project" value="UniProtKB-UniRule"/>
</dbReference>
<dbReference type="GO" id="GO:0009234">
    <property type="term" value="P:menaquinone biosynthetic process"/>
    <property type="evidence" value="ECO:0007669"/>
    <property type="project" value="UniProtKB-UniRule"/>
</dbReference>
<dbReference type="GO" id="GO:0032259">
    <property type="term" value="P:methylation"/>
    <property type="evidence" value="ECO:0007669"/>
    <property type="project" value="UniProtKB-KW"/>
</dbReference>
<dbReference type="CDD" id="cd02440">
    <property type="entry name" value="AdoMet_MTases"/>
    <property type="match status" value="1"/>
</dbReference>
<dbReference type="Gene3D" id="3.40.50.150">
    <property type="entry name" value="Vaccinia Virus protein VP39"/>
    <property type="match status" value="1"/>
</dbReference>
<dbReference type="HAMAP" id="MF_01813">
    <property type="entry name" value="MenG_UbiE_methyltr"/>
    <property type="match status" value="1"/>
</dbReference>
<dbReference type="InterPro" id="IPR029063">
    <property type="entry name" value="SAM-dependent_MTases_sf"/>
</dbReference>
<dbReference type="InterPro" id="IPR004033">
    <property type="entry name" value="UbiE/COQ5_MeTrFase"/>
</dbReference>
<dbReference type="InterPro" id="IPR023576">
    <property type="entry name" value="UbiE/COQ5_MeTrFase_CS"/>
</dbReference>
<dbReference type="NCBIfam" id="TIGR01934">
    <property type="entry name" value="MenG_MenH_UbiE"/>
    <property type="match status" value="1"/>
</dbReference>
<dbReference type="NCBIfam" id="NF001240">
    <property type="entry name" value="PRK00216.1-1"/>
    <property type="match status" value="1"/>
</dbReference>
<dbReference type="NCBIfam" id="NF001244">
    <property type="entry name" value="PRK00216.1-5"/>
    <property type="match status" value="1"/>
</dbReference>
<dbReference type="PANTHER" id="PTHR43591:SF24">
    <property type="entry name" value="2-METHOXY-6-POLYPRENYL-1,4-BENZOQUINOL METHYLASE, MITOCHONDRIAL"/>
    <property type="match status" value="1"/>
</dbReference>
<dbReference type="PANTHER" id="PTHR43591">
    <property type="entry name" value="METHYLTRANSFERASE"/>
    <property type="match status" value="1"/>
</dbReference>
<dbReference type="Pfam" id="PF01209">
    <property type="entry name" value="Ubie_methyltran"/>
    <property type="match status" value="1"/>
</dbReference>
<dbReference type="SUPFAM" id="SSF53335">
    <property type="entry name" value="S-adenosyl-L-methionine-dependent methyltransferases"/>
    <property type="match status" value="1"/>
</dbReference>
<dbReference type="PROSITE" id="PS51608">
    <property type="entry name" value="SAM_MT_UBIE"/>
    <property type="match status" value="1"/>
</dbReference>
<dbReference type="PROSITE" id="PS01183">
    <property type="entry name" value="UBIE_1"/>
    <property type="match status" value="1"/>
</dbReference>
<dbReference type="PROSITE" id="PS01184">
    <property type="entry name" value="UBIE_2"/>
    <property type="match status" value="1"/>
</dbReference>